<protein>
    <recommendedName>
        <fullName evidence="1">Transcription factor E</fullName>
        <shortName evidence="1">TFE</shortName>
    </recommendedName>
    <alternativeName>
        <fullName evidence="1">TFIIE subunit alpha homolog</fullName>
    </alternativeName>
    <alternativeName>
        <fullName evidence="1">Transcription initiation factor TFIIE</fullName>
    </alternativeName>
</protein>
<sequence length="191" mass="22469">MSKRNKELLEIGRDIGGDEAVEIIKALEKKGEATDEELAEITGIRVNTVRKILYALYDAKLADFRRVKDDETGWYYYYWHIETKRLPEIIRARKMQELEKLKKMLQEETSEVYYHCGNPDHPKLTFDEAFEYGFVCPICGEILHQYDNSAVIEELKKRIEELEIELGLRAPPKKEKKGKKSKKRSKKSKKK</sequence>
<gene>
    <name evidence="1" type="primary">tfe</name>
    <name type="ordered locus">PH0619</name>
</gene>
<organism>
    <name type="scientific">Pyrococcus horikoshii (strain ATCC 700860 / DSM 12428 / JCM 9974 / NBRC 100139 / OT-3)</name>
    <dbReference type="NCBI Taxonomy" id="70601"/>
    <lineage>
        <taxon>Archaea</taxon>
        <taxon>Methanobacteriati</taxon>
        <taxon>Methanobacteriota</taxon>
        <taxon>Thermococci</taxon>
        <taxon>Thermococcales</taxon>
        <taxon>Thermococcaceae</taxon>
        <taxon>Pyrococcus</taxon>
    </lineage>
</organism>
<proteinExistence type="inferred from homology"/>
<keyword id="KW-0238">DNA-binding</keyword>
<keyword id="KW-0804">Transcription</keyword>
<keyword id="KW-0805">Transcription regulation</keyword>
<dbReference type="EMBL" id="BA000001">
    <property type="protein sequence ID" value="BAA29708.1"/>
    <property type="status" value="ALT_INIT"/>
    <property type="molecule type" value="Genomic_DNA"/>
</dbReference>
<dbReference type="PIR" id="B71106">
    <property type="entry name" value="B71106"/>
</dbReference>
<dbReference type="RefSeq" id="WP_048053176.1">
    <property type="nucleotide sequence ID" value="NC_000961.1"/>
</dbReference>
<dbReference type="SMR" id="O58353"/>
<dbReference type="STRING" id="70601.gene:9377560"/>
<dbReference type="EnsemblBacteria" id="BAA29708">
    <property type="protein sequence ID" value="BAA29708"/>
    <property type="gene ID" value="BAA29708"/>
</dbReference>
<dbReference type="GeneID" id="1442951"/>
<dbReference type="KEGG" id="pho:PH0619"/>
<dbReference type="eggNOG" id="arCOG04270">
    <property type="taxonomic scope" value="Archaea"/>
</dbReference>
<dbReference type="OrthoDB" id="5935at2157"/>
<dbReference type="Proteomes" id="UP000000752">
    <property type="component" value="Chromosome"/>
</dbReference>
<dbReference type="GO" id="GO:0003677">
    <property type="term" value="F:DNA binding"/>
    <property type="evidence" value="ECO:0007669"/>
    <property type="project" value="UniProtKB-KW"/>
</dbReference>
<dbReference type="GO" id="GO:0006355">
    <property type="term" value="P:regulation of DNA-templated transcription"/>
    <property type="evidence" value="ECO:0007669"/>
    <property type="project" value="InterPro"/>
</dbReference>
<dbReference type="GO" id="GO:0006367">
    <property type="term" value="P:transcription initiation at RNA polymerase II promoter"/>
    <property type="evidence" value="ECO:0007669"/>
    <property type="project" value="InterPro"/>
</dbReference>
<dbReference type="Gene3D" id="1.10.10.10">
    <property type="entry name" value="Winged helix-like DNA-binding domain superfamily/Winged helix DNA-binding domain"/>
    <property type="match status" value="1"/>
</dbReference>
<dbReference type="HAMAP" id="MF_01909">
    <property type="entry name" value="TFE_arch"/>
    <property type="match status" value="1"/>
</dbReference>
<dbReference type="InterPro" id="IPR016481">
    <property type="entry name" value="TF_E_archaea"/>
</dbReference>
<dbReference type="InterPro" id="IPR039997">
    <property type="entry name" value="TFE"/>
</dbReference>
<dbReference type="InterPro" id="IPR017919">
    <property type="entry name" value="TFIIE/TFIIEa_HTH"/>
</dbReference>
<dbReference type="InterPro" id="IPR002853">
    <property type="entry name" value="TFIIE_asu"/>
</dbReference>
<dbReference type="InterPro" id="IPR024550">
    <property type="entry name" value="TFIIEa/SarR/Rpc3_HTH_dom"/>
</dbReference>
<dbReference type="InterPro" id="IPR036388">
    <property type="entry name" value="WH-like_DNA-bd_sf"/>
</dbReference>
<dbReference type="InterPro" id="IPR036390">
    <property type="entry name" value="WH_DNA-bd_sf"/>
</dbReference>
<dbReference type="NCBIfam" id="NF004910">
    <property type="entry name" value="PRK06266.1"/>
    <property type="match status" value="1"/>
</dbReference>
<dbReference type="NCBIfam" id="TIGR00373">
    <property type="entry name" value="transcription factor E"/>
    <property type="match status" value="1"/>
</dbReference>
<dbReference type="PANTHER" id="PTHR13097:SF7">
    <property type="entry name" value="GENERAL TRANSCRIPTION FACTOR IIE SUBUNIT 1"/>
    <property type="match status" value="1"/>
</dbReference>
<dbReference type="PANTHER" id="PTHR13097">
    <property type="entry name" value="TRANSCRIPTION INITIATION FACTOR IIE, ALPHA SUBUNIT"/>
    <property type="match status" value="1"/>
</dbReference>
<dbReference type="Pfam" id="PF02002">
    <property type="entry name" value="TFIIE_alpha"/>
    <property type="match status" value="1"/>
</dbReference>
<dbReference type="PIRSF" id="PIRSF006373">
    <property type="entry name" value="TF_E_archaea"/>
    <property type="match status" value="1"/>
</dbReference>
<dbReference type="SMART" id="SM00531">
    <property type="entry name" value="TFIIE"/>
    <property type="match status" value="1"/>
</dbReference>
<dbReference type="SUPFAM" id="SSF46785">
    <property type="entry name" value="Winged helix' DNA-binding domain"/>
    <property type="match status" value="1"/>
</dbReference>
<dbReference type="PROSITE" id="PS51344">
    <property type="entry name" value="HTH_TFE_IIE"/>
    <property type="match status" value="1"/>
</dbReference>
<comment type="function">
    <text evidence="1">Transcription factor that plays a role in the activation of archaeal genes transcribed by RNA polymerase. Facilitates transcription initiation by enhancing TATA-box recognition by TATA-box-binding protein (Tbp), and transcription factor B (Tfb) and RNA polymerase recruitment. Not absolutely required for transcription in vitro, but particularly important in cases where Tbp or Tfb function is not optimal. It dynamically alters the nucleic acid-binding properties of RNA polymerases by stabilizing the initiation complex and destabilizing elongation complexes. Seems to translocate with the RNA polymerase following initiation and acts by binding to the non template strand of the transcription bubble in elongation complexes.</text>
</comment>
<comment type="subunit">
    <text evidence="1">Monomer. Interaction with RNA polymerase subunits RpoF and RpoE is necessary for Tfe stimulatory transcription activity. Able to interact with Tbp and RNA polymerase in the absence of DNA promoter. Interacts both with the preinitiation and elongation complexes.</text>
</comment>
<comment type="domain">
    <text evidence="1">The winged helix domain is involved in binding to DNA in the preinitiation complex.</text>
</comment>
<comment type="similarity">
    <text evidence="1">Belongs to the TFE family.</text>
</comment>
<comment type="sequence caution" evidence="3">
    <conflict type="erroneous initiation">
        <sequence resource="EMBL-CDS" id="BAA29708"/>
    </conflict>
</comment>
<accession>O58353</accession>
<feature type="chain" id="PRO_0000326620" description="Transcription factor E">
    <location>
        <begin position="1"/>
        <end position="191"/>
    </location>
</feature>
<feature type="domain" description="HTH TFE/IIEalpha-type" evidence="1">
    <location>
        <begin position="4"/>
        <end position="87"/>
    </location>
</feature>
<feature type="region of interest" description="Disordered" evidence="2">
    <location>
        <begin position="170"/>
        <end position="191"/>
    </location>
</feature>
<feature type="compositionally biased region" description="Basic residues" evidence="2">
    <location>
        <begin position="174"/>
        <end position="191"/>
    </location>
</feature>
<name>TFE_PYRHO</name>
<evidence type="ECO:0000255" key="1">
    <source>
        <dbReference type="HAMAP-Rule" id="MF_01909"/>
    </source>
</evidence>
<evidence type="ECO:0000256" key="2">
    <source>
        <dbReference type="SAM" id="MobiDB-lite"/>
    </source>
</evidence>
<evidence type="ECO:0000305" key="3"/>
<reference key="1">
    <citation type="journal article" date="1998" name="DNA Res.">
        <title>Complete sequence and gene organization of the genome of a hyper-thermophilic archaebacterium, Pyrococcus horikoshii OT3.</title>
        <authorList>
            <person name="Kawarabayasi Y."/>
            <person name="Sawada M."/>
            <person name="Horikawa H."/>
            <person name="Haikawa Y."/>
            <person name="Hino Y."/>
            <person name="Yamamoto S."/>
            <person name="Sekine M."/>
            <person name="Baba S."/>
            <person name="Kosugi H."/>
            <person name="Hosoyama A."/>
            <person name="Nagai Y."/>
            <person name="Sakai M."/>
            <person name="Ogura K."/>
            <person name="Otsuka R."/>
            <person name="Nakazawa H."/>
            <person name="Takamiya M."/>
            <person name="Ohfuku Y."/>
            <person name="Funahashi T."/>
            <person name="Tanaka T."/>
            <person name="Kudoh Y."/>
            <person name="Yamazaki J."/>
            <person name="Kushida N."/>
            <person name="Oguchi A."/>
            <person name="Aoki K."/>
            <person name="Yoshizawa T."/>
            <person name="Nakamura Y."/>
            <person name="Robb F.T."/>
            <person name="Horikoshi K."/>
            <person name="Masuchi Y."/>
            <person name="Shizuya H."/>
            <person name="Kikuchi H."/>
        </authorList>
    </citation>
    <scope>NUCLEOTIDE SEQUENCE [LARGE SCALE GENOMIC DNA]</scope>
    <source>
        <strain>ATCC 700860 / DSM 12428 / JCM 9974 / NBRC 100139 / OT-3</strain>
    </source>
</reference>